<sequence length="120" mass="13260">MYAIVRDRGMQYRVEEGQALDIALLDAEPGSEIELGDVLLIGGEQPRVGTPTVDGAKVVATVLGTIKGDKIVVFRYKNKKRYRRRTGHRQEYTRVSISKIIVDADEQHVTGSMEGETNGA</sequence>
<organism>
    <name type="scientific">Roseiflexus sp. (strain RS-1)</name>
    <dbReference type="NCBI Taxonomy" id="357808"/>
    <lineage>
        <taxon>Bacteria</taxon>
        <taxon>Bacillati</taxon>
        <taxon>Chloroflexota</taxon>
        <taxon>Chloroflexia</taxon>
        <taxon>Chloroflexales</taxon>
        <taxon>Roseiflexineae</taxon>
        <taxon>Roseiflexaceae</taxon>
        <taxon>Roseiflexus</taxon>
    </lineage>
</organism>
<name>RL21_ROSS1</name>
<reference key="1">
    <citation type="submission" date="2007-04" db="EMBL/GenBank/DDBJ databases">
        <title>Complete sequence of Roseiflexus sp. RS-1.</title>
        <authorList>
            <consortium name="US DOE Joint Genome Institute"/>
            <person name="Copeland A."/>
            <person name="Lucas S."/>
            <person name="Lapidus A."/>
            <person name="Barry K."/>
            <person name="Detter J.C."/>
            <person name="Glavina del Rio T."/>
            <person name="Hammon N."/>
            <person name="Israni S."/>
            <person name="Dalin E."/>
            <person name="Tice H."/>
            <person name="Pitluck S."/>
            <person name="Chertkov O."/>
            <person name="Brettin T."/>
            <person name="Bruce D."/>
            <person name="Han C."/>
            <person name="Schmutz J."/>
            <person name="Larimer F."/>
            <person name="Land M."/>
            <person name="Hauser L."/>
            <person name="Kyrpides N."/>
            <person name="Mikhailova N."/>
            <person name="Bryant D.A."/>
            <person name="Richardson P."/>
        </authorList>
    </citation>
    <scope>NUCLEOTIDE SEQUENCE [LARGE SCALE GENOMIC DNA]</scope>
    <source>
        <strain>RS-1</strain>
    </source>
</reference>
<keyword id="KW-0687">Ribonucleoprotein</keyword>
<keyword id="KW-0689">Ribosomal protein</keyword>
<keyword id="KW-0694">RNA-binding</keyword>
<keyword id="KW-0699">rRNA-binding</keyword>
<proteinExistence type="inferred from homology"/>
<comment type="function">
    <text evidence="1">This protein binds to 23S rRNA in the presence of protein L20.</text>
</comment>
<comment type="subunit">
    <text evidence="1">Part of the 50S ribosomal subunit. Contacts protein L20.</text>
</comment>
<comment type="similarity">
    <text evidence="1">Belongs to the bacterial ribosomal protein bL21 family.</text>
</comment>
<protein>
    <recommendedName>
        <fullName evidence="1">Large ribosomal subunit protein bL21</fullName>
    </recommendedName>
    <alternativeName>
        <fullName evidence="2">50S ribosomal protein L21</fullName>
    </alternativeName>
</protein>
<accession>A5UWR6</accession>
<evidence type="ECO:0000255" key="1">
    <source>
        <dbReference type="HAMAP-Rule" id="MF_01363"/>
    </source>
</evidence>
<evidence type="ECO:0000305" key="2"/>
<feature type="chain" id="PRO_1000067889" description="Large ribosomal subunit protein bL21">
    <location>
        <begin position="1"/>
        <end position="120"/>
    </location>
</feature>
<dbReference type="EMBL" id="CP000686">
    <property type="protein sequence ID" value="ABQ91069.1"/>
    <property type="molecule type" value="Genomic_DNA"/>
</dbReference>
<dbReference type="RefSeq" id="WP_011957413.1">
    <property type="nucleotide sequence ID" value="NC_009523.1"/>
</dbReference>
<dbReference type="SMR" id="A5UWR6"/>
<dbReference type="STRING" id="357808.RoseRS_2695"/>
<dbReference type="KEGG" id="rrs:RoseRS_2695"/>
<dbReference type="eggNOG" id="COG0261">
    <property type="taxonomic scope" value="Bacteria"/>
</dbReference>
<dbReference type="HOGENOM" id="CLU_061463_3_2_0"/>
<dbReference type="OrthoDB" id="9813334at2"/>
<dbReference type="Proteomes" id="UP000006554">
    <property type="component" value="Chromosome"/>
</dbReference>
<dbReference type="GO" id="GO:0005737">
    <property type="term" value="C:cytoplasm"/>
    <property type="evidence" value="ECO:0007669"/>
    <property type="project" value="UniProtKB-ARBA"/>
</dbReference>
<dbReference type="GO" id="GO:1990904">
    <property type="term" value="C:ribonucleoprotein complex"/>
    <property type="evidence" value="ECO:0007669"/>
    <property type="project" value="UniProtKB-KW"/>
</dbReference>
<dbReference type="GO" id="GO:0005840">
    <property type="term" value="C:ribosome"/>
    <property type="evidence" value="ECO:0007669"/>
    <property type="project" value="UniProtKB-KW"/>
</dbReference>
<dbReference type="GO" id="GO:0019843">
    <property type="term" value="F:rRNA binding"/>
    <property type="evidence" value="ECO:0007669"/>
    <property type="project" value="UniProtKB-UniRule"/>
</dbReference>
<dbReference type="GO" id="GO:0003735">
    <property type="term" value="F:structural constituent of ribosome"/>
    <property type="evidence" value="ECO:0007669"/>
    <property type="project" value="InterPro"/>
</dbReference>
<dbReference type="GO" id="GO:0006412">
    <property type="term" value="P:translation"/>
    <property type="evidence" value="ECO:0007669"/>
    <property type="project" value="UniProtKB-UniRule"/>
</dbReference>
<dbReference type="HAMAP" id="MF_01363">
    <property type="entry name" value="Ribosomal_bL21"/>
    <property type="match status" value="1"/>
</dbReference>
<dbReference type="InterPro" id="IPR028909">
    <property type="entry name" value="bL21-like"/>
</dbReference>
<dbReference type="InterPro" id="IPR036164">
    <property type="entry name" value="bL21-like_sf"/>
</dbReference>
<dbReference type="InterPro" id="IPR001787">
    <property type="entry name" value="Ribosomal_bL21"/>
</dbReference>
<dbReference type="InterPro" id="IPR018258">
    <property type="entry name" value="Ribosomal_bL21_CS"/>
</dbReference>
<dbReference type="NCBIfam" id="TIGR00061">
    <property type="entry name" value="L21"/>
    <property type="match status" value="1"/>
</dbReference>
<dbReference type="PANTHER" id="PTHR21349">
    <property type="entry name" value="50S RIBOSOMAL PROTEIN L21"/>
    <property type="match status" value="1"/>
</dbReference>
<dbReference type="PANTHER" id="PTHR21349:SF0">
    <property type="entry name" value="LARGE RIBOSOMAL SUBUNIT PROTEIN BL21M"/>
    <property type="match status" value="1"/>
</dbReference>
<dbReference type="Pfam" id="PF00829">
    <property type="entry name" value="Ribosomal_L21p"/>
    <property type="match status" value="1"/>
</dbReference>
<dbReference type="SUPFAM" id="SSF141091">
    <property type="entry name" value="L21p-like"/>
    <property type="match status" value="1"/>
</dbReference>
<dbReference type="PROSITE" id="PS01169">
    <property type="entry name" value="RIBOSOMAL_L21"/>
    <property type="match status" value="1"/>
</dbReference>
<gene>
    <name evidence="1" type="primary">rplU</name>
    <name type="ordered locus">RoseRS_2695</name>
</gene>